<name>RBFA_HAHCH</name>
<dbReference type="EMBL" id="CP000155">
    <property type="protein sequence ID" value="ABC28112.1"/>
    <property type="molecule type" value="Genomic_DNA"/>
</dbReference>
<dbReference type="RefSeq" id="WP_011395185.1">
    <property type="nucleotide sequence ID" value="NC_007645.1"/>
</dbReference>
<dbReference type="SMR" id="Q2SML2"/>
<dbReference type="STRING" id="349521.HCH_01240"/>
<dbReference type="KEGG" id="hch:HCH_01240"/>
<dbReference type="eggNOG" id="COG0858">
    <property type="taxonomic scope" value="Bacteria"/>
</dbReference>
<dbReference type="HOGENOM" id="CLU_089475_5_0_6"/>
<dbReference type="OrthoDB" id="307788at2"/>
<dbReference type="Proteomes" id="UP000000238">
    <property type="component" value="Chromosome"/>
</dbReference>
<dbReference type="GO" id="GO:0005829">
    <property type="term" value="C:cytosol"/>
    <property type="evidence" value="ECO:0007669"/>
    <property type="project" value="TreeGrafter"/>
</dbReference>
<dbReference type="GO" id="GO:0043024">
    <property type="term" value="F:ribosomal small subunit binding"/>
    <property type="evidence" value="ECO:0007669"/>
    <property type="project" value="TreeGrafter"/>
</dbReference>
<dbReference type="GO" id="GO:0030490">
    <property type="term" value="P:maturation of SSU-rRNA"/>
    <property type="evidence" value="ECO:0007669"/>
    <property type="project" value="UniProtKB-UniRule"/>
</dbReference>
<dbReference type="Gene3D" id="3.30.300.20">
    <property type="match status" value="1"/>
</dbReference>
<dbReference type="HAMAP" id="MF_00003">
    <property type="entry name" value="RbfA"/>
    <property type="match status" value="1"/>
</dbReference>
<dbReference type="InterPro" id="IPR015946">
    <property type="entry name" value="KH_dom-like_a/b"/>
</dbReference>
<dbReference type="InterPro" id="IPR000238">
    <property type="entry name" value="RbfA"/>
</dbReference>
<dbReference type="InterPro" id="IPR023799">
    <property type="entry name" value="RbfA_dom_sf"/>
</dbReference>
<dbReference type="InterPro" id="IPR020053">
    <property type="entry name" value="Ribosome-bd_factorA_CS"/>
</dbReference>
<dbReference type="NCBIfam" id="TIGR00082">
    <property type="entry name" value="rbfA"/>
    <property type="match status" value="1"/>
</dbReference>
<dbReference type="PANTHER" id="PTHR33515">
    <property type="entry name" value="RIBOSOME-BINDING FACTOR A, CHLOROPLASTIC-RELATED"/>
    <property type="match status" value="1"/>
</dbReference>
<dbReference type="PANTHER" id="PTHR33515:SF1">
    <property type="entry name" value="RIBOSOME-BINDING FACTOR A, CHLOROPLASTIC-RELATED"/>
    <property type="match status" value="1"/>
</dbReference>
<dbReference type="Pfam" id="PF02033">
    <property type="entry name" value="RBFA"/>
    <property type="match status" value="1"/>
</dbReference>
<dbReference type="SUPFAM" id="SSF89919">
    <property type="entry name" value="Ribosome-binding factor A, RbfA"/>
    <property type="match status" value="1"/>
</dbReference>
<dbReference type="PROSITE" id="PS01319">
    <property type="entry name" value="RBFA"/>
    <property type="match status" value="1"/>
</dbReference>
<proteinExistence type="inferred from homology"/>
<gene>
    <name evidence="1" type="primary">rbfA</name>
    <name type="ordered locus">HCH_01240</name>
</gene>
<keyword id="KW-0963">Cytoplasm</keyword>
<keyword id="KW-1185">Reference proteome</keyword>
<keyword id="KW-0690">Ribosome biogenesis</keyword>
<accession>Q2SML2</accession>
<protein>
    <recommendedName>
        <fullName evidence="1">Ribosome-binding factor A</fullName>
    </recommendedName>
</protein>
<feature type="chain" id="PRO_1000000118" description="Ribosome-binding factor A">
    <location>
        <begin position="1"/>
        <end position="135"/>
    </location>
</feature>
<organism>
    <name type="scientific">Hahella chejuensis (strain KCTC 2396)</name>
    <dbReference type="NCBI Taxonomy" id="349521"/>
    <lineage>
        <taxon>Bacteria</taxon>
        <taxon>Pseudomonadati</taxon>
        <taxon>Pseudomonadota</taxon>
        <taxon>Gammaproteobacteria</taxon>
        <taxon>Oceanospirillales</taxon>
        <taxon>Hahellaceae</taxon>
        <taxon>Hahella</taxon>
    </lineage>
</organism>
<reference key="1">
    <citation type="journal article" date="2005" name="Nucleic Acids Res.">
        <title>Genomic blueprint of Hahella chejuensis, a marine microbe producing an algicidal agent.</title>
        <authorList>
            <person name="Jeong H."/>
            <person name="Yim J.H."/>
            <person name="Lee C."/>
            <person name="Choi S.-H."/>
            <person name="Park Y.K."/>
            <person name="Yoon S.H."/>
            <person name="Hur C.-G."/>
            <person name="Kang H.-Y."/>
            <person name="Kim D."/>
            <person name="Lee H.H."/>
            <person name="Park K.H."/>
            <person name="Park S.-H."/>
            <person name="Park H.-S."/>
            <person name="Lee H.K."/>
            <person name="Oh T.K."/>
            <person name="Kim J.F."/>
        </authorList>
    </citation>
    <scope>NUCLEOTIDE SEQUENCE [LARGE SCALE GENOMIC DNA]</scope>
    <source>
        <strain>KCTC 2396</strain>
    </source>
</reference>
<evidence type="ECO:0000255" key="1">
    <source>
        <dbReference type="HAMAP-Rule" id="MF_00003"/>
    </source>
</evidence>
<sequence>MAREFSRLDRVAEQIQKELAQLIQRELKDPRLGMVTVNSVKVSKDLSYADVYVTVLNLKDVEDDGDASKASLKVLESAAGFLRSELGRAIKLRVMPQLRFHYDASVSNAQRLGALIQKARAKDSSASDSSDDSHN</sequence>
<comment type="function">
    <text evidence="1">One of several proteins that assist in the late maturation steps of the functional core of the 30S ribosomal subunit. Associates with free 30S ribosomal subunits (but not with 30S subunits that are part of 70S ribosomes or polysomes). Required for efficient processing of 16S rRNA. May interact with the 5'-terminal helix region of 16S rRNA.</text>
</comment>
<comment type="subunit">
    <text evidence="1">Monomer. Binds 30S ribosomal subunits, but not 50S ribosomal subunits or 70S ribosomes.</text>
</comment>
<comment type="subcellular location">
    <subcellularLocation>
        <location evidence="1">Cytoplasm</location>
    </subcellularLocation>
</comment>
<comment type="similarity">
    <text evidence="1">Belongs to the RbfA family.</text>
</comment>